<feature type="initiator methionine" description="Removed" evidence="1">
    <location>
        <position position="1"/>
    </location>
</feature>
<feature type="chain" id="PRO_0000145999" description="Phosphoglycerate kinase">
    <location>
        <begin position="2"/>
        <end position="387"/>
    </location>
</feature>
<feature type="binding site" evidence="1">
    <location>
        <begin position="21"/>
        <end position="23"/>
    </location>
    <ligand>
        <name>substrate</name>
    </ligand>
</feature>
<feature type="binding site" evidence="1">
    <location>
        <position position="36"/>
    </location>
    <ligand>
        <name>substrate</name>
    </ligand>
</feature>
<feature type="binding site" evidence="1">
    <location>
        <begin position="59"/>
        <end position="62"/>
    </location>
    <ligand>
        <name>substrate</name>
    </ligand>
</feature>
<feature type="binding site" evidence="1">
    <location>
        <position position="113"/>
    </location>
    <ligand>
        <name>substrate</name>
    </ligand>
</feature>
<feature type="binding site" evidence="1">
    <location>
        <position position="146"/>
    </location>
    <ligand>
        <name>substrate</name>
    </ligand>
</feature>
<feature type="binding site" evidence="1">
    <location>
        <position position="197"/>
    </location>
    <ligand>
        <name>ATP</name>
        <dbReference type="ChEBI" id="CHEBI:30616"/>
    </ligand>
</feature>
<feature type="binding site" evidence="1">
    <location>
        <position position="314"/>
    </location>
    <ligand>
        <name>ATP</name>
        <dbReference type="ChEBI" id="CHEBI:30616"/>
    </ligand>
</feature>
<feature type="binding site" evidence="1">
    <location>
        <begin position="340"/>
        <end position="343"/>
    </location>
    <ligand>
        <name>ATP</name>
        <dbReference type="ChEBI" id="CHEBI:30616"/>
    </ligand>
</feature>
<feature type="modified residue" description="N6-acetyllysine" evidence="1">
    <location>
        <position position="84"/>
    </location>
</feature>
<reference key="1">
    <citation type="journal article" date="2002" name="Nucleic Acids Res.">
        <title>Genome sequence of Shigella flexneri 2a: insights into pathogenicity through comparison with genomes of Escherichia coli K12 and O157.</title>
        <authorList>
            <person name="Jin Q."/>
            <person name="Yuan Z."/>
            <person name="Xu J."/>
            <person name="Wang Y."/>
            <person name="Shen Y."/>
            <person name="Lu W."/>
            <person name="Wang J."/>
            <person name="Liu H."/>
            <person name="Yang J."/>
            <person name="Yang F."/>
            <person name="Zhang X."/>
            <person name="Zhang J."/>
            <person name="Yang G."/>
            <person name="Wu H."/>
            <person name="Qu D."/>
            <person name="Dong J."/>
            <person name="Sun L."/>
            <person name="Xue Y."/>
            <person name="Zhao A."/>
            <person name="Gao Y."/>
            <person name="Zhu J."/>
            <person name="Kan B."/>
            <person name="Ding K."/>
            <person name="Chen S."/>
            <person name="Cheng H."/>
            <person name="Yao Z."/>
            <person name="He B."/>
            <person name="Chen R."/>
            <person name="Ma D."/>
            <person name="Qiang B."/>
            <person name="Wen Y."/>
            <person name="Hou Y."/>
            <person name="Yu J."/>
        </authorList>
    </citation>
    <scope>NUCLEOTIDE SEQUENCE [LARGE SCALE GENOMIC DNA]</scope>
    <source>
        <strain>301 / Serotype 2a</strain>
    </source>
</reference>
<reference key="2">
    <citation type="journal article" date="2003" name="Infect. Immun.">
        <title>Complete genome sequence and comparative genomics of Shigella flexneri serotype 2a strain 2457T.</title>
        <authorList>
            <person name="Wei J."/>
            <person name="Goldberg M.B."/>
            <person name="Burland V."/>
            <person name="Venkatesan M.M."/>
            <person name="Deng W."/>
            <person name="Fournier G."/>
            <person name="Mayhew G.F."/>
            <person name="Plunkett G. III"/>
            <person name="Rose D.J."/>
            <person name="Darling A."/>
            <person name="Mau B."/>
            <person name="Perna N.T."/>
            <person name="Payne S.M."/>
            <person name="Runyen-Janecky L.J."/>
            <person name="Zhou S."/>
            <person name="Schwartz D.C."/>
            <person name="Blattner F.R."/>
        </authorList>
    </citation>
    <scope>NUCLEOTIDE SEQUENCE [LARGE SCALE GENOMIC DNA]</scope>
    <source>
        <strain>ATCC 700930 / 2457T / Serotype 2a</strain>
    </source>
</reference>
<comment type="catalytic activity">
    <reaction>
        <text>(2R)-3-phosphoglycerate + ATP = (2R)-3-phospho-glyceroyl phosphate + ADP</text>
        <dbReference type="Rhea" id="RHEA:14801"/>
        <dbReference type="ChEBI" id="CHEBI:30616"/>
        <dbReference type="ChEBI" id="CHEBI:57604"/>
        <dbReference type="ChEBI" id="CHEBI:58272"/>
        <dbReference type="ChEBI" id="CHEBI:456216"/>
        <dbReference type="EC" id="2.7.2.3"/>
    </reaction>
</comment>
<comment type="pathway">
    <text>Carbohydrate degradation; glycolysis; pyruvate from D-glyceraldehyde 3-phosphate: step 2/5.</text>
</comment>
<comment type="subunit">
    <text evidence="1">Monomer.</text>
</comment>
<comment type="subcellular location">
    <subcellularLocation>
        <location evidence="2">Cytoplasm</location>
    </subcellularLocation>
</comment>
<comment type="similarity">
    <text evidence="2">Belongs to the phosphoglycerate kinase family.</text>
</comment>
<proteinExistence type="inferred from homology"/>
<accession>P0A7A1</accession>
<accession>P11665</accession>
<organism>
    <name type="scientific">Shigella flexneri</name>
    <dbReference type="NCBI Taxonomy" id="623"/>
    <lineage>
        <taxon>Bacteria</taxon>
        <taxon>Pseudomonadati</taxon>
        <taxon>Pseudomonadota</taxon>
        <taxon>Gammaproteobacteria</taxon>
        <taxon>Enterobacterales</taxon>
        <taxon>Enterobacteriaceae</taxon>
        <taxon>Shigella</taxon>
    </lineage>
</organism>
<dbReference type="EC" id="2.7.2.3"/>
<dbReference type="EMBL" id="AE005674">
    <property type="protein sequence ID" value="AAN44393.2"/>
    <property type="molecule type" value="Genomic_DNA"/>
</dbReference>
<dbReference type="EMBL" id="AE014073">
    <property type="protein sequence ID" value="AAP18215.1"/>
    <property type="molecule type" value="Genomic_DNA"/>
</dbReference>
<dbReference type="RefSeq" id="NP_708686.2">
    <property type="nucleotide sequence ID" value="NC_004337.2"/>
</dbReference>
<dbReference type="RefSeq" id="WP_000111269.1">
    <property type="nucleotide sequence ID" value="NZ_WPGW01000018.1"/>
</dbReference>
<dbReference type="SMR" id="P0A7A1"/>
<dbReference type="STRING" id="198214.SF2911"/>
<dbReference type="PaxDb" id="198214-SF2911"/>
<dbReference type="GeneID" id="1025922"/>
<dbReference type="GeneID" id="89517738"/>
<dbReference type="KEGG" id="sfl:SF2911"/>
<dbReference type="KEGG" id="sfx:S3111"/>
<dbReference type="PATRIC" id="fig|198214.7.peg.3462"/>
<dbReference type="HOGENOM" id="CLU_025427_0_2_6"/>
<dbReference type="UniPathway" id="UPA00109">
    <property type="reaction ID" value="UER00185"/>
</dbReference>
<dbReference type="Proteomes" id="UP000001006">
    <property type="component" value="Chromosome"/>
</dbReference>
<dbReference type="Proteomes" id="UP000002673">
    <property type="component" value="Chromosome"/>
</dbReference>
<dbReference type="GO" id="GO:0005829">
    <property type="term" value="C:cytosol"/>
    <property type="evidence" value="ECO:0007669"/>
    <property type="project" value="TreeGrafter"/>
</dbReference>
<dbReference type="GO" id="GO:0043531">
    <property type="term" value="F:ADP binding"/>
    <property type="evidence" value="ECO:0007669"/>
    <property type="project" value="TreeGrafter"/>
</dbReference>
<dbReference type="GO" id="GO:0005524">
    <property type="term" value="F:ATP binding"/>
    <property type="evidence" value="ECO:0007669"/>
    <property type="project" value="UniProtKB-KW"/>
</dbReference>
<dbReference type="GO" id="GO:0004618">
    <property type="term" value="F:phosphoglycerate kinase activity"/>
    <property type="evidence" value="ECO:0007669"/>
    <property type="project" value="UniProtKB-UniRule"/>
</dbReference>
<dbReference type="GO" id="GO:0006094">
    <property type="term" value="P:gluconeogenesis"/>
    <property type="evidence" value="ECO:0007669"/>
    <property type="project" value="TreeGrafter"/>
</dbReference>
<dbReference type="GO" id="GO:0006096">
    <property type="term" value="P:glycolytic process"/>
    <property type="evidence" value="ECO:0007669"/>
    <property type="project" value="UniProtKB-UniRule"/>
</dbReference>
<dbReference type="CDD" id="cd00318">
    <property type="entry name" value="Phosphoglycerate_kinase"/>
    <property type="match status" value="1"/>
</dbReference>
<dbReference type="FunFam" id="3.40.50.1260:FF:000001">
    <property type="entry name" value="Phosphoglycerate kinase"/>
    <property type="match status" value="1"/>
</dbReference>
<dbReference type="FunFam" id="3.40.50.1260:FF:000002">
    <property type="entry name" value="Phosphoglycerate kinase"/>
    <property type="match status" value="1"/>
</dbReference>
<dbReference type="Gene3D" id="3.40.50.1260">
    <property type="entry name" value="Phosphoglycerate kinase, N-terminal domain"/>
    <property type="match status" value="2"/>
</dbReference>
<dbReference type="HAMAP" id="MF_00145">
    <property type="entry name" value="Phosphoglyc_kinase"/>
    <property type="match status" value="1"/>
</dbReference>
<dbReference type="InterPro" id="IPR001576">
    <property type="entry name" value="Phosphoglycerate_kinase"/>
</dbReference>
<dbReference type="InterPro" id="IPR015911">
    <property type="entry name" value="Phosphoglycerate_kinase_CS"/>
</dbReference>
<dbReference type="InterPro" id="IPR015824">
    <property type="entry name" value="Phosphoglycerate_kinase_N"/>
</dbReference>
<dbReference type="InterPro" id="IPR036043">
    <property type="entry name" value="Phosphoglycerate_kinase_sf"/>
</dbReference>
<dbReference type="PANTHER" id="PTHR11406">
    <property type="entry name" value="PHOSPHOGLYCERATE KINASE"/>
    <property type="match status" value="1"/>
</dbReference>
<dbReference type="PANTHER" id="PTHR11406:SF23">
    <property type="entry name" value="PHOSPHOGLYCERATE KINASE 1, CHLOROPLASTIC-RELATED"/>
    <property type="match status" value="1"/>
</dbReference>
<dbReference type="Pfam" id="PF00162">
    <property type="entry name" value="PGK"/>
    <property type="match status" value="1"/>
</dbReference>
<dbReference type="PIRSF" id="PIRSF000724">
    <property type="entry name" value="Pgk"/>
    <property type="match status" value="1"/>
</dbReference>
<dbReference type="PRINTS" id="PR00477">
    <property type="entry name" value="PHGLYCKINASE"/>
</dbReference>
<dbReference type="SUPFAM" id="SSF53748">
    <property type="entry name" value="Phosphoglycerate kinase"/>
    <property type="match status" value="1"/>
</dbReference>
<dbReference type="PROSITE" id="PS00111">
    <property type="entry name" value="PGLYCERATE_KINASE"/>
    <property type="match status" value="1"/>
</dbReference>
<protein>
    <recommendedName>
        <fullName>Phosphoglycerate kinase</fullName>
        <ecNumber>2.7.2.3</ecNumber>
    </recommendedName>
</protein>
<gene>
    <name type="primary">pgk</name>
    <name type="ordered locus">SF2911</name>
    <name type="ordered locus">S3111</name>
</gene>
<sequence length="387" mass="41118">MSVIKMTDLDLAGKRVFIRADLNVPVKDGKVTSDARIRASLPTIELALKQGAKVMVTSHLGRPTEGEYNEEFSLLPVVNYLKDKLSNPVRLVKDYLDGVDVAEGELVVLENVRFNKGEKKDDETLSKKYAALCDVFVMDAFGTAHRAQASTHGIGKFADVACAGPLLAAELDALGKALKEPARPMVAIVGGSKVSTKLTVLDSLSKIADQLIVGGGIANTFIAAQGHDVGKSLYEADLVDEAKRLLTTCNIPVPSDVRVATEFSETAPATLKSVNDVKADEQILDIGDASAQELAEILKNAKTILWNGPVGVFEFPNFRKGTEIVANAIADSEAFSIAGGGDTLAAIDLFGIADKISYISTGGGAFLEFVEGKVLPAVAMLEERAKK</sequence>
<keyword id="KW-0007">Acetylation</keyword>
<keyword id="KW-0067">ATP-binding</keyword>
<keyword id="KW-0963">Cytoplasm</keyword>
<keyword id="KW-0324">Glycolysis</keyword>
<keyword id="KW-0418">Kinase</keyword>
<keyword id="KW-0547">Nucleotide-binding</keyword>
<keyword id="KW-1185">Reference proteome</keyword>
<keyword id="KW-0808">Transferase</keyword>
<evidence type="ECO:0000250" key="1"/>
<evidence type="ECO:0000305" key="2"/>
<name>PGK_SHIFL</name>